<gene>
    <name evidence="1" type="primary">nqrD</name>
    <name type="ordered locus">VFMJ11_0748</name>
</gene>
<evidence type="ECO:0000255" key="1">
    <source>
        <dbReference type="HAMAP-Rule" id="MF_00428"/>
    </source>
</evidence>
<reference key="1">
    <citation type="submission" date="2008-08" db="EMBL/GenBank/DDBJ databases">
        <title>Complete sequence of Vibrio fischeri strain MJ11.</title>
        <authorList>
            <person name="Mandel M.J."/>
            <person name="Stabb E.V."/>
            <person name="Ruby E.G."/>
            <person name="Ferriera S."/>
            <person name="Johnson J."/>
            <person name="Kravitz S."/>
            <person name="Beeson K."/>
            <person name="Sutton G."/>
            <person name="Rogers Y.-H."/>
            <person name="Friedman R."/>
            <person name="Frazier M."/>
            <person name="Venter J.C."/>
        </authorList>
    </citation>
    <scope>NUCLEOTIDE SEQUENCE [LARGE SCALE GENOMIC DNA]</scope>
    <source>
        <strain>MJ11</strain>
    </source>
</reference>
<sequence>MASAKDIKKSILAPVLDNNPIALQVLGVCSALAVTTKLETAFVMTLAVMFVTALSNLFVSLIRNHMPNSVRIIVQMAIIASLVIVVDQVLKAYLYDISKQLSVFVSLIITNCIVMGRAEAFAMKSAPFPSFIDGIGNGLGYGFVLMTVAFFRELLGSGKLFGVEVLPLVSNGGWYQPNGLMLLAPSAFFLIGFMIWAIRILKPEQVEAKE</sequence>
<organism>
    <name type="scientific">Aliivibrio fischeri (strain MJ11)</name>
    <name type="common">Vibrio fischeri</name>
    <dbReference type="NCBI Taxonomy" id="388396"/>
    <lineage>
        <taxon>Bacteria</taxon>
        <taxon>Pseudomonadati</taxon>
        <taxon>Pseudomonadota</taxon>
        <taxon>Gammaproteobacteria</taxon>
        <taxon>Vibrionales</taxon>
        <taxon>Vibrionaceae</taxon>
        <taxon>Aliivibrio</taxon>
    </lineage>
</organism>
<proteinExistence type="inferred from homology"/>
<protein>
    <recommendedName>
        <fullName evidence="1">Na(+)-translocating NADH-quinone reductase subunit D</fullName>
        <shortName evidence="1">Na(+)-NQR subunit D</shortName>
        <shortName evidence="1">Na(+)-translocating NQR subunit D</shortName>
        <ecNumber evidence="1">7.2.1.1</ecNumber>
    </recommendedName>
    <alternativeName>
        <fullName evidence="1">NQR complex subunit D</fullName>
    </alternativeName>
    <alternativeName>
        <fullName evidence="1">NQR-1 subunit D</fullName>
    </alternativeName>
</protein>
<keyword id="KW-0997">Cell inner membrane</keyword>
<keyword id="KW-1003">Cell membrane</keyword>
<keyword id="KW-0406">Ion transport</keyword>
<keyword id="KW-0472">Membrane</keyword>
<keyword id="KW-0520">NAD</keyword>
<keyword id="KW-0915">Sodium</keyword>
<keyword id="KW-0739">Sodium transport</keyword>
<keyword id="KW-1278">Translocase</keyword>
<keyword id="KW-0812">Transmembrane</keyword>
<keyword id="KW-1133">Transmembrane helix</keyword>
<keyword id="KW-0813">Transport</keyword>
<keyword id="KW-0830">Ubiquinone</keyword>
<feature type="chain" id="PRO_1000191691" description="Na(+)-translocating NADH-quinone reductase subunit D">
    <location>
        <begin position="1"/>
        <end position="210"/>
    </location>
</feature>
<feature type="transmembrane region" description="Helical" evidence="1">
    <location>
        <begin position="42"/>
        <end position="62"/>
    </location>
</feature>
<feature type="transmembrane region" description="Helical" evidence="1">
    <location>
        <begin position="72"/>
        <end position="92"/>
    </location>
</feature>
<feature type="transmembrane region" description="Helical" evidence="1">
    <location>
        <begin position="103"/>
        <end position="123"/>
    </location>
</feature>
<feature type="transmembrane region" description="Helical" evidence="1">
    <location>
        <begin position="131"/>
        <end position="151"/>
    </location>
</feature>
<feature type="transmembrane region" description="Helical" evidence="1">
    <location>
        <begin position="178"/>
        <end position="198"/>
    </location>
</feature>
<comment type="function">
    <text evidence="1">NQR complex catalyzes the reduction of ubiquinone-1 to ubiquinol by two successive reactions, coupled with the transport of Na(+) ions from the cytoplasm to the periplasm. NqrA to NqrE are probably involved in the second step, the conversion of ubisemiquinone to ubiquinol.</text>
</comment>
<comment type="catalytic activity">
    <reaction evidence="1">
        <text>a ubiquinone + n Na(+)(in) + NADH + H(+) = a ubiquinol + n Na(+)(out) + NAD(+)</text>
        <dbReference type="Rhea" id="RHEA:47748"/>
        <dbReference type="Rhea" id="RHEA-COMP:9565"/>
        <dbReference type="Rhea" id="RHEA-COMP:9566"/>
        <dbReference type="ChEBI" id="CHEBI:15378"/>
        <dbReference type="ChEBI" id="CHEBI:16389"/>
        <dbReference type="ChEBI" id="CHEBI:17976"/>
        <dbReference type="ChEBI" id="CHEBI:29101"/>
        <dbReference type="ChEBI" id="CHEBI:57540"/>
        <dbReference type="ChEBI" id="CHEBI:57945"/>
        <dbReference type="EC" id="7.2.1.1"/>
    </reaction>
</comment>
<comment type="subunit">
    <text evidence="1">Composed of six subunits; NqrA, NqrB, NqrC, NqrD, NqrE and NqrF.</text>
</comment>
<comment type="subcellular location">
    <subcellularLocation>
        <location evidence="1">Cell inner membrane</location>
        <topology evidence="1">Multi-pass membrane protein</topology>
    </subcellularLocation>
</comment>
<comment type="similarity">
    <text evidence="1">Belongs to the NqrDE/RnfAE family.</text>
</comment>
<dbReference type="EC" id="7.2.1.1" evidence="1"/>
<dbReference type="EMBL" id="CP001139">
    <property type="protein sequence ID" value="ACH65875.1"/>
    <property type="molecule type" value="Genomic_DNA"/>
</dbReference>
<dbReference type="RefSeq" id="WP_005418135.1">
    <property type="nucleotide sequence ID" value="NC_011184.1"/>
</dbReference>
<dbReference type="SMR" id="B5FBI3"/>
<dbReference type="GeneID" id="54163383"/>
<dbReference type="KEGG" id="vfm:VFMJ11_0748"/>
<dbReference type="HOGENOM" id="CLU_046659_1_1_6"/>
<dbReference type="Proteomes" id="UP000001857">
    <property type="component" value="Chromosome I"/>
</dbReference>
<dbReference type="GO" id="GO:0005886">
    <property type="term" value="C:plasma membrane"/>
    <property type="evidence" value="ECO:0007669"/>
    <property type="project" value="UniProtKB-SubCell"/>
</dbReference>
<dbReference type="GO" id="GO:0016655">
    <property type="term" value="F:oxidoreductase activity, acting on NAD(P)H, quinone or similar compound as acceptor"/>
    <property type="evidence" value="ECO:0007669"/>
    <property type="project" value="UniProtKB-UniRule"/>
</dbReference>
<dbReference type="GO" id="GO:0006814">
    <property type="term" value="P:sodium ion transport"/>
    <property type="evidence" value="ECO:0007669"/>
    <property type="project" value="UniProtKB-UniRule"/>
</dbReference>
<dbReference type="HAMAP" id="MF_00428">
    <property type="entry name" value="NqrD"/>
    <property type="match status" value="1"/>
</dbReference>
<dbReference type="InterPro" id="IPR011292">
    <property type="entry name" value="NqrD"/>
</dbReference>
<dbReference type="InterPro" id="IPR003667">
    <property type="entry name" value="NqrDE/RnfAE"/>
</dbReference>
<dbReference type="NCBIfam" id="TIGR01939">
    <property type="entry name" value="nqrD"/>
    <property type="match status" value="1"/>
</dbReference>
<dbReference type="NCBIfam" id="NF006777">
    <property type="entry name" value="PRK09292.1"/>
    <property type="match status" value="1"/>
</dbReference>
<dbReference type="NCBIfam" id="NF009070">
    <property type="entry name" value="PRK12405.1"/>
    <property type="match status" value="1"/>
</dbReference>
<dbReference type="PANTHER" id="PTHR30586">
    <property type="entry name" value="ELECTRON TRANSPORT COMPLEX PROTEIN RNFE"/>
    <property type="match status" value="1"/>
</dbReference>
<dbReference type="PANTHER" id="PTHR30586:SF1">
    <property type="entry name" value="NA(+)-TRANSLOCATING NADH-QUINONE REDUCTASE SUBUNIT D"/>
    <property type="match status" value="1"/>
</dbReference>
<dbReference type="Pfam" id="PF02508">
    <property type="entry name" value="Rnf-Nqr"/>
    <property type="match status" value="1"/>
</dbReference>
<dbReference type="PIRSF" id="PIRSF006102">
    <property type="entry name" value="NQR_DE"/>
    <property type="match status" value="1"/>
</dbReference>
<accession>B5FBI3</accession>
<name>NQRD_ALIFM</name>